<reference key="1">
    <citation type="journal article" date="2006" name="Theor. Appl. Genet.">
        <title>Complete chloroplast genome sequences of Solanum bulbocastanum, Solanum lycopersicum and comparative analyses with other Solanaceae genomes.</title>
        <authorList>
            <person name="Daniell H."/>
            <person name="Lee S.-B."/>
            <person name="Grevich J."/>
            <person name="Saski C."/>
            <person name="Quesada-Vargas T."/>
            <person name="Guda C."/>
            <person name="Tomkins J."/>
            <person name="Jansen R.K."/>
        </authorList>
    </citation>
    <scope>NUCLEOTIDE SEQUENCE [LARGE SCALE GENOMIC DNA]</scope>
    <source>
        <strain>cv. LA3023</strain>
    </source>
</reference>
<reference key="2">
    <citation type="journal article" date="2006" name="J. Mol. Evol.">
        <title>Sequence of the tomato chloroplast DNA and evolutionary comparison of solanaceous plastid genomes.</title>
        <authorList>
            <person name="Kahlau S."/>
            <person name="Aspinall S."/>
            <person name="Gray J.C."/>
            <person name="Bock R."/>
        </authorList>
    </citation>
    <scope>NUCLEOTIDE SEQUENCE [LARGE SCALE GENOMIC DNA]</scope>
    <source>
        <strain>cv. IPA-6</strain>
    </source>
</reference>
<evidence type="ECO:0000255" key="1">
    <source>
        <dbReference type="HAMAP-Rule" id="MF_00059"/>
    </source>
</evidence>
<keyword id="KW-0150">Chloroplast</keyword>
<keyword id="KW-0240">DNA-directed RNA polymerase</keyword>
<keyword id="KW-0548">Nucleotidyltransferase</keyword>
<keyword id="KW-0934">Plastid</keyword>
<keyword id="KW-1185">Reference proteome</keyword>
<keyword id="KW-0804">Transcription</keyword>
<keyword id="KW-0808">Transferase</keyword>
<name>RPOA_SOLLC</name>
<geneLocation type="chloroplast"/>
<sequence>MVREKVTVSTRTLQWKCVESRTDSKRLYYGRFILSPLMKGQADTIGIAMRRALLGEIEGTCITRVKSEKVPHEYSTITGIQESVHEILMNLKEIVLRSNLYGTSEASICVKGPGYVTAQDIILPPYVEIVDNTQHIASLTEPIDFCIGLQIERNRGYLIKTPHNFQDGSYPIDAVFMPVRNANHSIHSYGNGNEKQEILFIEIWTNGSLTPKEALHDASRNLIDLFIPFLHMEEDNLYLQDNQHTVPLSPFTFHDKLAKLIKNKKKIALKSIFIDQSELSSRIYNCLKMSNIYTLLDLLNNSQEDLMKIEHFRSEDIKQILDILEKYFVIDLAKNKF</sequence>
<gene>
    <name evidence="1" type="primary">rpoA</name>
</gene>
<protein>
    <recommendedName>
        <fullName evidence="1">DNA-directed RNA polymerase subunit alpha</fullName>
        <shortName evidence="1">PEP</shortName>
        <ecNumber evidence="1">2.7.7.6</ecNumber>
    </recommendedName>
    <alternativeName>
        <fullName evidence="1">Plastid-encoded RNA polymerase subunit alpha</fullName>
        <shortName evidence="1">RNA polymerase subunit alpha</shortName>
    </alternativeName>
</protein>
<proteinExistence type="inferred from homology"/>
<comment type="function">
    <text evidence="1">DNA-dependent RNA polymerase catalyzes the transcription of DNA into RNA using the four ribonucleoside triphosphates as substrates.</text>
</comment>
<comment type="catalytic activity">
    <reaction evidence="1">
        <text>RNA(n) + a ribonucleoside 5'-triphosphate = RNA(n+1) + diphosphate</text>
        <dbReference type="Rhea" id="RHEA:21248"/>
        <dbReference type="Rhea" id="RHEA-COMP:14527"/>
        <dbReference type="Rhea" id="RHEA-COMP:17342"/>
        <dbReference type="ChEBI" id="CHEBI:33019"/>
        <dbReference type="ChEBI" id="CHEBI:61557"/>
        <dbReference type="ChEBI" id="CHEBI:140395"/>
        <dbReference type="EC" id="2.7.7.6"/>
    </reaction>
</comment>
<comment type="subunit">
    <text evidence="1">In plastids the minimal PEP RNA polymerase catalytic core is composed of four subunits: alpha, beta, beta', and beta''. When a (nuclear-encoded) sigma factor is associated with the core the holoenzyme is formed, which can initiate transcription.</text>
</comment>
<comment type="subcellular location">
    <subcellularLocation>
        <location>Plastid</location>
        <location>Chloroplast</location>
    </subcellularLocation>
</comment>
<comment type="domain">
    <text evidence="1">The N-terminal domain is essential for RNAP assembly and basal transcription, whereas the C-terminal domain is involved in interaction with transcriptional regulators and with upstream promoter elements.</text>
</comment>
<comment type="similarity">
    <text evidence="1">Belongs to the RNA polymerase alpha chain family.</text>
</comment>
<organism>
    <name type="scientific">Solanum lycopersicum</name>
    <name type="common">Tomato</name>
    <name type="synonym">Lycopersicon esculentum</name>
    <dbReference type="NCBI Taxonomy" id="4081"/>
    <lineage>
        <taxon>Eukaryota</taxon>
        <taxon>Viridiplantae</taxon>
        <taxon>Streptophyta</taxon>
        <taxon>Embryophyta</taxon>
        <taxon>Tracheophyta</taxon>
        <taxon>Spermatophyta</taxon>
        <taxon>Magnoliopsida</taxon>
        <taxon>eudicotyledons</taxon>
        <taxon>Gunneridae</taxon>
        <taxon>Pentapetalae</taxon>
        <taxon>asterids</taxon>
        <taxon>lamiids</taxon>
        <taxon>Solanales</taxon>
        <taxon>Solanaceae</taxon>
        <taxon>Solanoideae</taxon>
        <taxon>Solaneae</taxon>
        <taxon>Solanum</taxon>
        <taxon>Solanum subgen. Lycopersicon</taxon>
    </lineage>
</organism>
<dbReference type="EC" id="2.7.7.6" evidence="1"/>
<dbReference type="EMBL" id="DQ347959">
    <property type="protein sequence ID" value="ABC56331.1"/>
    <property type="molecule type" value="Genomic_DNA"/>
</dbReference>
<dbReference type="EMBL" id="AM087200">
    <property type="protein sequence ID" value="CAJ32426.1"/>
    <property type="molecule type" value="Genomic_DNA"/>
</dbReference>
<dbReference type="RefSeq" id="AP_004960.1">
    <property type="nucleotide sequence ID" value="AC_000188.1"/>
</dbReference>
<dbReference type="RefSeq" id="YP_008563120.1">
    <property type="nucleotide sequence ID" value="NC_007898.3"/>
</dbReference>
<dbReference type="SMR" id="Q2MI69"/>
<dbReference type="FunCoup" id="Q2MI69">
    <property type="interactions" value="140"/>
</dbReference>
<dbReference type="STRING" id="4081.Q2MI69"/>
<dbReference type="PaxDb" id="4081-Solyc01g007560.2.1"/>
<dbReference type="GeneID" id="3950412"/>
<dbReference type="KEGG" id="sly:3950412"/>
<dbReference type="eggNOG" id="ENOG502QRS7">
    <property type="taxonomic scope" value="Eukaryota"/>
</dbReference>
<dbReference type="InParanoid" id="Q2MI69"/>
<dbReference type="OrthoDB" id="1586219at2759"/>
<dbReference type="Proteomes" id="UP000004994">
    <property type="component" value="Chloroplast"/>
</dbReference>
<dbReference type="GO" id="GO:0009507">
    <property type="term" value="C:chloroplast"/>
    <property type="evidence" value="ECO:0007669"/>
    <property type="project" value="UniProtKB-SubCell"/>
</dbReference>
<dbReference type="GO" id="GO:0000428">
    <property type="term" value="C:DNA-directed RNA polymerase complex"/>
    <property type="evidence" value="ECO:0007669"/>
    <property type="project" value="UniProtKB-KW"/>
</dbReference>
<dbReference type="GO" id="GO:0005739">
    <property type="term" value="C:mitochondrion"/>
    <property type="evidence" value="ECO:0007669"/>
    <property type="project" value="GOC"/>
</dbReference>
<dbReference type="GO" id="GO:0003677">
    <property type="term" value="F:DNA binding"/>
    <property type="evidence" value="ECO:0007669"/>
    <property type="project" value="UniProtKB-UniRule"/>
</dbReference>
<dbReference type="GO" id="GO:0003899">
    <property type="term" value="F:DNA-directed RNA polymerase activity"/>
    <property type="evidence" value="ECO:0007669"/>
    <property type="project" value="UniProtKB-UniRule"/>
</dbReference>
<dbReference type="GO" id="GO:0046983">
    <property type="term" value="F:protein dimerization activity"/>
    <property type="evidence" value="ECO:0007669"/>
    <property type="project" value="InterPro"/>
</dbReference>
<dbReference type="GO" id="GO:0006351">
    <property type="term" value="P:DNA-templated transcription"/>
    <property type="evidence" value="ECO:0007669"/>
    <property type="project" value="UniProtKB-UniRule"/>
</dbReference>
<dbReference type="CDD" id="cd06928">
    <property type="entry name" value="RNAP_alpha_NTD"/>
    <property type="match status" value="1"/>
</dbReference>
<dbReference type="FunFam" id="1.10.150.20:FF:000021">
    <property type="entry name" value="DNA-directed RNA polymerase subunit alpha"/>
    <property type="match status" value="1"/>
</dbReference>
<dbReference type="FunFam" id="2.170.120.12:FF:000001">
    <property type="entry name" value="DNA-directed RNA polymerase subunit alpha"/>
    <property type="match status" value="1"/>
</dbReference>
<dbReference type="FunFam" id="3.30.1360.10:FF:000039">
    <property type="entry name" value="DNA-directed RNA polymerase subunit alpha"/>
    <property type="match status" value="1"/>
</dbReference>
<dbReference type="Gene3D" id="1.10.150.20">
    <property type="entry name" value="5' to 3' exonuclease, C-terminal subdomain"/>
    <property type="match status" value="1"/>
</dbReference>
<dbReference type="Gene3D" id="2.170.120.12">
    <property type="entry name" value="DNA-directed RNA polymerase, insert domain"/>
    <property type="match status" value="1"/>
</dbReference>
<dbReference type="Gene3D" id="3.30.1360.10">
    <property type="entry name" value="RNA polymerase, RBP11-like subunit"/>
    <property type="match status" value="1"/>
</dbReference>
<dbReference type="HAMAP" id="MF_00059">
    <property type="entry name" value="RNApol_bact_RpoA"/>
    <property type="match status" value="1"/>
</dbReference>
<dbReference type="InterPro" id="IPR011262">
    <property type="entry name" value="DNA-dir_RNA_pol_insert"/>
</dbReference>
<dbReference type="InterPro" id="IPR011263">
    <property type="entry name" value="DNA-dir_RNA_pol_RpoA/D/Rpb3"/>
</dbReference>
<dbReference type="InterPro" id="IPR011773">
    <property type="entry name" value="DNA-dir_RpoA"/>
</dbReference>
<dbReference type="InterPro" id="IPR036603">
    <property type="entry name" value="RBP11-like"/>
</dbReference>
<dbReference type="InterPro" id="IPR011260">
    <property type="entry name" value="RNAP_asu_C"/>
</dbReference>
<dbReference type="InterPro" id="IPR036643">
    <property type="entry name" value="RNApol_insert_sf"/>
</dbReference>
<dbReference type="NCBIfam" id="TIGR02027">
    <property type="entry name" value="rpoA"/>
    <property type="match status" value="1"/>
</dbReference>
<dbReference type="Pfam" id="PF01000">
    <property type="entry name" value="RNA_pol_A_bac"/>
    <property type="match status" value="1"/>
</dbReference>
<dbReference type="Pfam" id="PF03118">
    <property type="entry name" value="RNA_pol_A_CTD"/>
    <property type="match status" value="1"/>
</dbReference>
<dbReference type="Pfam" id="PF01193">
    <property type="entry name" value="RNA_pol_L"/>
    <property type="match status" value="1"/>
</dbReference>
<dbReference type="SMART" id="SM00662">
    <property type="entry name" value="RPOLD"/>
    <property type="match status" value="1"/>
</dbReference>
<dbReference type="SUPFAM" id="SSF47789">
    <property type="entry name" value="C-terminal domain of RNA polymerase alpha subunit"/>
    <property type="match status" value="1"/>
</dbReference>
<dbReference type="SUPFAM" id="SSF56553">
    <property type="entry name" value="Insert subdomain of RNA polymerase alpha subunit"/>
    <property type="match status" value="1"/>
</dbReference>
<dbReference type="SUPFAM" id="SSF55257">
    <property type="entry name" value="RBP11-like subunits of RNA polymerase"/>
    <property type="match status" value="1"/>
</dbReference>
<feature type="chain" id="PRO_0000236289" description="DNA-directed RNA polymerase subunit alpha">
    <location>
        <begin position="1"/>
        <end position="337"/>
    </location>
</feature>
<feature type="region of interest" description="Alpha N-terminal domain (alpha-NTD)" evidence="1">
    <location>
        <begin position="1"/>
        <end position="233"/>
    </location>
</feature>
<feature type="region of interest" description="Alpha C-terminal domain (alpha-CTD)" evidence="1">
    <location>
        <begin position="265"/>
        <end position="337"/>
    </location>
</feature>
<accession>Q2MI69</accession>